<protein>
    <recommendedName>
        <fullName evidence="1">Neuraminidase</fullName>
        <ecNumber evidence="1">3.2.1.18</ecNumber>
    </recommendedName>
</protein>
<proteinExistence type="inferred from homology"/>
<organismHost>
    <name type="scientific">Aves</name>
    <dbReference type="NCBI Taxonomy" id="8782"/>
</organismHost>
<organismHost>
    <name type="scientific">Felis catus</name>
    <name type="common">Cat</name>
    <name type="synonym">Felis silvestris catus</name>
    <dbReference type="NCBI Taxonomy" id="9685"/>
</organismHost>
<organismHost>
    <name type="scientific">Homo sapiens</name>
    <name type="common">Human</name>
    <dbReference type="NCBI Taxonomy" id="9606"/>
</organismHost>
<organismHost>
    <name type="scientific">Panthera pardus</name>
    <name type="common">Leopard</name>
    <name type="synonym">Felis pardus</name>
    <dbReference type="NCBI Taxonomy" id="9691"/>
</organismHost>
<organismHost>
    <name type="scientific">Panthera tigris</name>
    <name type="common">Tiger</name>
    <dbReference type="NCBI Taxonomy" id="9694"/>
</organismHost>
<organismHost>
    <name type="scientific">Sus scrofa</name>
    <name type="common">Pig</name>
    <dbReference type="NCBI Taxonomy" id="9823"/>
</organismHost>
<evidence type="ECO:0000255" key="1">
    <source>
        <dbReference type="HAMAP-Rule" id="MF_04071"/>
    </source>
</evidence>
<sequence>MNPNQKIITIGSICMVIGIVSLMLQIGNIISIWVSHSIQTGNQHQAEPCNQSIITYENNTWVNQTYVNISNTNFLTEKAVASVTLAGNSSLCPISGWAVYSKDNGIRIGSKGDVFVIREPFISCSHLECRTFFLTQGALLNDKHSNGTVKDRSPYRTLMSCPVGEAPSPYNSRFESVAWSASACHDGTSWLTIGISGPDNGAVAVLKYNGIITDTIKSWRNNILRTQESECACVNGSCFTVMTDGPSNGQASYKIFKIEKGKVVKSVELNAPNYHYEECSCYPDAGEITCVCRDNWHGSNRPWVSFNQNLEYQIGYICSGVFGDNPRPNDGTGSCGPVSPNGAYGIKGFSFKYGNGVWIGRTKSTNSRSGFEMIWDPNGWTGTDSNFSVKQDIVAITDWSGYSGSFVQHPELTGVDCIRPCFWVELIRGRPKESTIWTSGSSISFCGVNSDTVGWSWPDGAELPFTIDK</sequence>
<organism>
    <name type="scientific">Influenza A virus (strain A/Chicken/Hong Kong/715.5/2001 H5N1 genotype E)</name>
    <dbReference type="NCBI Taxonomy" id="196434"/>
    <lineage>
        <taxon>Viruses</taxon>
        <taxon>Riboviria</taxon>
        <taxon>Orthornavirae</taxon>
        <taxon>Negarnaviricota</taxon>
        <taxon>Polyploviricotina</taxon>
        <taxon>Insthoviricetes</taxon>
        <taxon>Articulavirales</taxon>
        <taxon>Orthomyxoviridae</taxon>
        <taxon>Alphainfluenzavirus</taxon>
        <taxon>Alphainfluenzavirus influenzae</taxon>
        <taxon>Influenza A virus</taxon>
    </lineage>
</organism>
<reference key="1">
    <citation type="journal article" date="2002" name="Proc. Natl. Acad. Sci. U.S.A.">
        <title>Emergence of multiple genotypes of H5N1 avian influenza viruses in Hong Kong SAR.</title>
        <authorList>
            <person name="Guan Y."/>
            <person name="Peiris J.S.M."/>
            <person name="Lipatov A.S."/>
            <person name="Ellis T.M."/>
            <person name="Dyrting K.C."/>
            <person name="Krauss S."/>
            <person name="Zhang L.J."/>
            <person name="Webster R.G."/>
            <person name="Shortridge K.F."/>
        </authorList>
    </citation>
    <scope>NUCLEOTIDE SEQUENCE [GENOMIC RNA]</scope>
</reference>
<reference key="2">
    <citation type="submission" date="2008-03" db="EMBL/GenBank/DDBJ databases">
        <authorList>
            <person name="Li K.S."/>
            <person name="Xu K.M."/>
            <person name="Guan Y."/>
        </authorList>
    </citation>
    <scope>SEQUENCE REVISION</scope>
</reference>
<name>NRAM_I01A3</name>
<comment type="function">
    <text evidence="1">Catalyzes the removal of terminal sialic acid residues from viral and cellular glycoconjugates. Cleaves off the terminal sialic acids on the glycosylated HA during virus budding to facilitate virus release. Additionally helps virus spread through the circulation by further removing sialic acids from the cell surface. These cleavages prevent self-aggregation and ensure the efficient spread of the progeny virus from cell to cell. Otherwise, infection would be limited to one round of replication. Described as a receptor-destroying enzyme because it cleaves a terminal sialic acid from the cellular receptors. May facilitate viral invasion of the upper airways by cleaving the sialic acid moieties on the mucin of the airway epithelial cells. Likely to plays a role in the budding process through its association with lipid rafts during intracellular transport. May additionally display a raft-association independent effect on budding. Plays a role in the determination of host range restriction on replication and virulence. Sialidase activity in late endosome/lysosome traffic seems to enhance virus replication.</text>
</comment>
<comment type="catalytic activity">
    <reaction evidence="1">
        <text>Hydrolysis of alpha-(2-&gt;3)-, alpha-(2-&gt;6)-, alpha-(2-&gt;8)- glycosidic linkages of terminal sialic acid residues in oligosaccharides, glycoproteins, glycolipids, colominic acid and synthetic substrates.</text>
        <dbReference type="EC" id="3.2.1.18"/>
    </reaction>
</comment>
<comment type="cofactor">
    <cofactor evidence="1">
        <name>Ca(2+)</name>
        <dbReference type="ChEBI" id="CHEBI:29108"/>
    </cofactor>
</comment>
<comment type="activity regulation">
    <text evidence="1">Inhibited by the neuraminidase inhibitors zanamivir (Relenza) and oseltamivir (Tamiflu). These drugs interfere with the release of progeny virus from infected cells and are effective against all influenza strains. Resistance to neuraminidase inhibitors is quite rare.</text>
</comment>
<comment type="subunit">
    <text evidence="1">Homotetramer.</text>
</comment>
<comment type="subcellular location">
    <subcellularLocation>
        <location evidence="1">Virion membrane</location>
    </subcellularLocation>
    <subcellularLocation>
        <location evidence="1">Host apical cell membrane</location>
        <topology evidence="1">Single-pass type II membrane protein</topology>
    </subcellularLocation>
    <text evidence="1">Preferentially accumulates at the apical plasma membrane in infected polarized epithelial cells, which is the virus assembly site. Uses lipid rafts for cell surface transport and apical sorting. In the virion, forms a mushroom-shaped spike on the surface of the membrane.</text>
</comment>
<comment type="domain">
    <text evidence="1">Intact N-terminus is essential for virion morphogenesis. Possesses two apical sorting signals, one in the ectodomain, which is likely to be a glycan, and the other in the transmembrane domain. The transmembrane domain also plays a role in lipid raft association.</text>
</comment>
<comment type="PTM">
    <text evidence="1">N-glycosylated.</text>
</comment>
<comment type="miscellaneous">
    <text>The influenza A genome consist of 8 RNA segments. Genetic variation of hemagglutinin and/or neuraminidase genes results in the emergence of new influenza strains. The mechanism of variation can be the result of point mutations or the result of genetic reassortment between segments of two different strains.</text>
</comment>
<comment type="similarity">
    <text evidence="1">Belongs to the glycosyl hydrolase 34 family.</text>
</comment>
<gene>
    <name evidence="1" type="primary">NA</name>
</gene>
<keyword id="KW-0106">Calcium</keyword>
<keyword id="KW-1015">Disulfide bond</keyword>
<keyword id="KW-0325">Glycoprotein</keyword>
<keyword id="KW-0326">Glycosidase</keyword>
<keyword id="KW-1032">Host cell membrane</keyword>
<keyword id="KW-1043">Host membrane</keyword>
<keyword id="KW-0378">Hydrolase</keyword>
<keyword id="KW-0472">Membrane</keyword>
<keyword id="KW-0479">Metal-binding</keyword>
<keyword id="KW-0735">Signal-anchor</keyword>
<keyword id="KW-0812">Transmembrane</keyword>
<keyword id="KW-1133">Transmembrane helix</keyword>
<keyword id="KW-0946">Virion</keyword>
<dbReference type="EC" id="3.2.1.18" evidence="1"/>
<dbReference type="EMBL" id="AF509100">
    <property type="protein sequence ID" value="AAO52943.2"/>
    <property type="molecule type" value="Genomic_DNA"/>
</dbReference>
<dbReference type="SMR" id="Q809U7"/>
<dbReference type="CAZy" id="GH34">
    <property type="family name" value="Glycoside Hydrolase Family 34"/>
</dbReference>
<dbReference type="GlyCosmos" id="Q809U7">
    <property type="glycosylation" value="8 sites, No reported glycans"/>
</dbReference>
<dbReference type="GO" id="GO:0020002">
    <property type="term" value="C:host cell plasma membrane"/>
    <property type="evidence" value="ECO:0007669"/>
    <property type="project" value="UniProtKB-SubCell"/>
</dbReference>
<dbReference type="GO" id="GO:0016020">
    <property type="term" value="C:membrane"/>
    <property type="evidence" value="ECO:0007669"/>
    <property type="project" value="UniProtKB-UniRule"/>
</dbReference>
<dbReference type="GO" id="GO:0055036">
    <property type="term" value="C:virion membrane"/>
    <property type="evidence" value="ECO:0007669"/>
    <property type="project" value="UniProtKB-SubCell"/>
</dbReference>
<dbReference type="GO" id="GO:0004308">
    <property type="term" value="F:exo-alpha-sialidase activity"/>
    <property type="evidence" value="ECO:0007669"/>
    <property type="project" value="UniProtKB-UniRule"/>
</dbReference>
<dbReference type="GO" id="GO:0046872">
    <property type="term" value="F:metal ion binding"/>
    <property type="evidence" value="ECO:0007669"/>
    <property type="project" value="UniProtKB-UniRule"/>
</dbReference>
<dbReference type="GO" id="GO:0005975">
    <property type="term" value="P:carbohydrate metabolic process"/>
    <property type="evidence" value="ECO:0007669"/>
    <property type="project" value="InterPro"/>
</dbReference>
<dbReference type="GO" id="GO:0046761">
    <property type="term" value="P:viral budding from plasma membrane"/>
    <property type="evidence" value="ECO:0007669"/>
    <property type="project" value="UniProtKB-UniRule"/>
</dbReference>
<dbReference type="CDD" id="cd15483">
    <property type="entry name" value="Influenza_NA"/>
    <property type="match status" value="1"/>
</dbReference>
<dbReference type="FunFam" id="2.120.10.10:FF:000001">
    <property type="entry name" value="Neuraminidase"/>
    <property type="match status" value="1"/>
</dbReference>
<dbReference type="Gene3D" id="2.120.10.10">
    <property type="match status" value="1"/>
</dbReference>
<dbReference type="HAMAP" id="MF_04071">
    <property type="entry name" value="INFV_NRAM"/>
    <property type="match status" value="1"/>
</dbReference>
<dbReference type="InterPro" id="IPR001860">
    <property type="entry name" value="Glyco_hydro_34"/>
</dbReference>
<dbReference type="InterPro" id="IPR033654">
    <property type="entry name" value="Sialidase_Influenza_A/B"/>
</dbReference>
<dbReference type="InterPro" id="IPR036278">
    <property type="entry name" value="Sialidase_sf"/>
</dbReference>
<dbReference type="Pfam" id="PF00064">
    <property type="entry name" value="Neur"/>
    <property type="match status" value="1"/>
</dbReference>
<dbReference type="SUPFAM" id="SSF50939">
    <property type="entry name" value="Sialidases"/>
    <property type="match status" value="1"/>
</dbReference>
<accession>Q809U7</accession>
<feature type="chain" id="PRO_0000310933" description="Neuraminidase">
    <location>
        <begin position="1"/>
        <end position="469"/>
    </location>
</feature>
<feature type="topological domain" description="Intravirion" evidence="1">
    <location>
        <begin position="1"/>
        <end position="6"/>
    </location>
</feature>
<feature type="transmembrane region" description="Helical" evidence="1">
    <location>
        <begin position="7"/>
        <end position="27"/>
    </location>
</feature>
<feature type="topological domain" description="Virion surface" evidence="1">
    <location>
        <begin position="28"/>
        <end position="469"/>
    </location>
</feature>
<feature type="region of interest" description="Involved in apical transport and lipid raft association" evidence="1">
    <location>
        <begin position="11"/>
        <end position="33"/>
    </location>
</feature>
<feature type="region of interest" description="Hypervariable stalk region" evidence="1">
    <location>
        <begin position="36"/>
        <end position="90"/>
    </location>
</feature>
<feature type="region of interest" description="Head of neuraminidase" evidence="1">
    <location>
        <begin position="91"/>
        <end position="469"/>
    </location>
</feature>
<feature type="active site" description="Proton donor/acceptor" evidence="1">
    <location>
        <position position="151"/>
    </location>
</feature>
<feature type="active site" description="Nucleophile" evidence="1">
    <location>
        <position position="402"/>
    </location>
</feature>
<feature type="binding site" evidence="1">
    <location>
        <position position="118"/>
    </location>
    <ligand>
        <name>substrate</name>
    </ligand>
</feature>
<feature type="binding site" evidence="1">
    <location>
        <position position="152"/>
    </location>
    <ligand>
        <name>substrate</name>
    </ligand>
</feature>
<feature type="binding site" evidence="1">
    <location>
        <begin position="277"/>
        <end position="278"/>
    </location>
    <ligand>
        <name>substrate</name>
    </ligand>
</feature>
<feature type="binding site" evidence="1">
    <location>
        <position position="293"/>
    </location>
    <ligand>
        <name>substrate</name>
    </ligand>
</feature>
<feature type="binding site" evidence="1">
    <location>
        <position position="294"/>
    </location>
    <ligand>
        <name>Ca(2+)</name>
        <dbReference type="ChEBI" id="CHEBI:29108"/>
    </ligand>
</feature>
<feature type="binding site" evidence="1">
    <location>
        <position position="298"/>
    </location>
    <ligand>
        <name>Ca(2+)</name>
        <dbReference type="ChEBI" id="CHEBI:29108"/>
    </ligand>
</feature>
<feature type="binding site" evidence="1">
    <location>
        <position position="324"/>
    </location>
    <ligand>
        <name>Ca(2+)</name>
        <dbReference type="ChEBI" id="CHEBI:29108"/>
    </ligand>
</feature>
<feature type="binding site" evidence="1">
    <location>
        <position position="368"/>
    </location>
    <ligand>
        <name>substrate</name>
    </ligand>
</feature>
<feature type="glycosylation site" description="N-linked (GlcNAc...) asparagine; by host" evidence="1">
    <location>
        <position position="50"/>
    </location>
</feature>
<feature type="glycosylation site" description="N-linked (GlcNAc...) asparagine; by host" evidence="1">
    <location>
        <position position="58"/>
    </location>
</feature>
<feature type="glycosylation site" description="N-linked (GlcNAc...) asparagine; by host" evidence="1">
    <location>
        <position position="63"/>
    </location>
</feature>
<feature type="glycosylation site" description="N-linked (GlcNAc...) asparagine; by host" evidence="1">
    <location>
        <position position="68"/>
    </location>
</feature>
<feature type="glycosylation site" description="N-linked (GlcNAc...) asparagine; by host" evidence="1">
    <location>
        <position position="88"/>
    </location>
</feature>
<feature type="glycosylation site" description="N-linked (GlcNAc...) asparagine; by host" evidence="1">
    <location>
        <position position="146"/>
    </location>
</feature>
<feature type="glycosylation site" description="N-linked (GlcNAc...) asparagine; by host" evidence="1">
    <location>
        <position position="235"/>
    </location>
</feature>
<feature type="glycosylation site" description="N-linked (GlcNAc...) asparagine; by host" evidence="1">
    <location>
        <position position="386"/>
    </location>
</feature>
<feature type="disulfide bond" evidence="1">
    <location>
        <begin position="92"/>
        <end position="417"/>
    </location>
</feature>
<feature type="disulfide bond" evidence="1">
    <location>
        <begin position="124"/>
        <end position="129"/>
    </location>
</feature>
<feature type="disulfide bond" evidence="1">
    <location>
        <begin position="184"/>
        <end position="231"/>
    </location>
</feature>
<feature type="disulfide bond" evidence="1">
    <location>
        <begin position="233"/>
        <end position="238"/>
    </location>
</feature>
<feature type="disulfide bond" evidence="1">
    <location>
        <begin position="279"/>
        <end position="292"/>
    </location>
</feature>
<feature type="disulfide bond" evidence="1">
    <location>
        <begin position="281"/>
        <end position="290"/>
    </location>
</feature>
<feature type="disulfide bond" evidence="1">
    <location>
        <begin position="318"/>
        <end position="335"/>
    </location>
</feature>
<feature type="disulfide bond" evidence="1">
    <location>
        <begin position="421"/>
        <end position="446"/>
    </location>
</feature>